<protein>
    <recommendedName>
        <fullName evidence="1">Nucleoside diphosphate kinase</fullName>
        <shortName evidence="1">NDK</shortName>
        <shortName evidence="1">NDP kinase</shortName>
        <ecNumber evidence="1">2.7.4.6</ecNumber>
    </recommendedName>
    <alternativeName>
        <fullName evidence="1">Nucleoside-2-P kinase</fullName>
    </alternativeName>
</protein>
<proteinExistence type="inferred from homology"/>
<keyword id="KW-0067">ATP-binding</keyword>
<keyword id="KW-0963">Cytoplasm</keyword>
<keyword id="KW-0418">Kinase</keyword>
<keyword id="KW-0460">Magnesium</keyword>
<keyword id="KW-0479">Metal-binding</keyword>
<keyword id="KW-0546">Nucleotide metabolism</keyword>
<keyword id="KW-0547">Nucleotide-binding</keyword>
<keyword id="KW-0597">Phosphoprotein</keyword>
<keyword id="KW-1185">Reference proteome</keyword>
<keyword id="KW-0808">Transferase</keyword>
<evidence type="ECO:0000255" key="1">
    <source>
        <dbReference type="HAMAP-Rule" id="MF_00451"/>
    </source>
</evidence>
<comment type="function">
    <text evidence="1">Major role in the synthesis of nucleoside triphosphates other than ATP. The ATP gamma phosphate is transferred to the NDP beta phosphate via a ping-pong mechanism, using a phosphorylated active-site intermediate.</text>
</comment>
<comment type="catalytic activity">
    <reaction evidence="1">
        <text>a 2'-deoxyribonucleoside 5'-diphosphate + ATP = a 2'-deoxyribonucleoside 5'-triphosphate + ADP</text>
        <dbReference type="Rhea" id="RHEA:44640"/>
        <dbReference type="ChEBI" id="CHEBI:30616"/>
        <dbReference type="ChEBI" id="CHEBI:61560"/>
        <dbReference type="ChEBI" id="CHEBI:73316"/>
        <dbReference type="ChEBI" id="CHEBI:456216"/>
        <dbReference type="EC" id="2.7.4.6"/>
    </reaction>
</comment>
<comment type="catalytic activity">
    <reaction evidence="1">
        <text>a ribonucleoside 5'-diphosphate + ATP = a ribonucleoside 5'-triphosphate + ADP</text>
        <dbReference type="Rhea" id="RHEA:18113"/>
        <dbReference type="ChEBI" id="CHEBI:30616"/>
        <dbReference type="ChEBI" id="CHEBI:57930"/>
        <dbReference type="ChEBI" id="CHEBI:61557"/>
        <dbReference type="ChEBI" id="CHEBI:456216"/>
        <dbReference type="EC" id="2.7.4.6"/>
    </reaction>
</comment>
<comment type="cofactor">
    <cofactor evidence="1">
        <name>Mg(2+)</name>
        <dbReference type="ChEBI" id="CHEBI:18420"/>
    </cofactor>
</comment>
<comment type="subunit">
    <text evidence="1">Homotetramer.</text>
</comment>
<comment type="subcellular location">
    <subcellularLocation>
        <location evidence="1">Cytoplasm</location>
    </subcellularLocation>
</comment>
<comment type="similarity">
    <text evidence="1">Belongs to the NDK family.</text>
</comment>
<dbReference type="EC" id="2.7.4.6" evidence="1"/>
<dbReference type="EMBL" id="CP000611">
    <property type="protein sequence ID" value="ABQ74241.1"/>
    <property type="molecule type" value="Genomic_DNA"/>
</dbReference>
<dbReference type="RefSeq" id="WP_003412592.1">
    <property type="nucleotide sequence ID" value="NZ_CP016972.1"/>
</dbReference>
<dbReference type="SMR" id="A5U5E1"/>
<dbReference type="GeneID" id="45426435"/>
<dbReference type="KEGG" id="mra:MRA_2471"/>
<dbReference type="eggNOG" id="COG0105">
    <property type="taxonomic scope" value="Bacteria"/>
</dbReference>
<dbReference type="HOGENOM" id="CLU_060216_6_3_11"/>
<dbReference type="BRENDA" id="2.7.4.6">
    <property type="organism ID" value="3445"/>
</dbReference>
<dbReference type="Proteomes" id="UP000001988">
    <property type="component" value="Chromosome"/>
</dbReference>
<dbReference type="GO" id="GO:0005737">
    <property type="term" value="C:cytoplasm"/>
    <property type="evidence" value="ECO:0007669"/>
    <property type="project" value="UniProtKB-SubCell"/>
</dbReference>
<dbReference type="GO" id="GO:0005524">
    <property type="term" value="F:ATP binding"/>
    <property type="evidence" value="ECO:0007669"/>
    <property type="project" value="UniProtKB-UniRule"/>
</dbReference>
<dbReference type="GO" id="GO:0046872">
    <property type="term" value="F:metal ion binding"/>
    <property type="evidence" value="ECO:0007669"/>
    <property type="project" value="UniProtKB-KW"/>
</dbReference>
<dbReference type="GO" id="GO:0004550">
    <property type="term" value="F:nucleoside diphosphate kinase activity"/>
    <property type="evidence" value="ECO:0007669"/>
    <property type="project" value="UniProtKB-UniRule"/>
</dbReference>
<dbReference type="GO" id="GO:0006241">
    <property type="term" value="P:CTP biosynthetic process"/>
    <property type="evidence" value="ECO:0007669"/>
    <property type="project" value="UniProtKB-UniRule"/>
</dbReference>
<dbReference type="GO" id="GO:0006183">
    <property type="term" value="P:GTP biosynthetic process"/>
    <property type="evidence" value="ECO:0007669"/>
    <property type="project" value="UniProtKB-UniRule"/>
</dbReference>
<dbReference type="GO" id="GO:0006228">
    <property type="term" value="P:UTP biosynthetic process"/>
    <property type="evidence" value="ECO:0007669"/>
    <property type="project" value="UniProtKB-UniRule"/>
</dbReference>
<dbReference type="CDD" id="cd04413">
    <property type="entry name" value="NDPk_I"/>
    <property type="match status" value="1"/>
</dbReference>
<dbReference type="FunFam" id="3.30.70.141:FF:000003">
    <property type="entry name" value="Nucleoside diphosphate kinase"/>
    <property type="match status" value="1"/>
</dbReference>
<dbReference type="Gene3D" id="3.30.70.141">
    <property type="entry name" value="Nucleoside diphosphate kinase-like domain"/>
    <property type="match status" value="1"/>
</dbReference>
<dbReference type="HAMAP" id="MF_00451">
    <property type="entry name" value="NDP_kinase"/>
    <property type="match status" value="1"/>
</dbReference>
<dbReference type="InterPro" id="IPR034907">
    <property type="entry name" value="NDK-like_dom"/>
</dbReference>
<dbReference type="InterPro" id="IPR036850">
    <property type="entry name" value="NDK-like_dom_sf"/>
</dbReference>
<dbReference type="InterPro" id="IPR001564">
    <property type="entry name" value="Nucleoside_diP_kinase"/>
</dbReference>
<dbReference type="NCBIfam" id="NF001908">
    <property type="entry name" value="PRK00668.1"/>
    <property type="match status" value="1"/>
</dbReference>
<dbReference type="PANTHER" id="PTHR11349">
    <property type="entry name" value="NUCLEOSIDE DIPHOSPHATE KINASE"/>
    <property type="match status" value="1"/>
</dbReference>
<dbReference type="Pfam" id="PF00334">
    <property type="entry name" value="NDK"/>
    <property type="match status" value="1"/>
</dbReference>
<dbReference type="PRINTS" id="PR01243">
    <property type="entry name" value="NUCDPKINASE"/>
</dbReference>
<dbReference type="SMART" id="SM00562">
    <property type="entry name" value="NDK"/>
    <property type="match status" value="1"/>
</dbReference>
<dbReference type="SUPFAM" id="SSF54919">
    <property type="entry name" value="Nucleoside diphosphate kinase, NDK"/>
    <property type="match status" value="1"/>
</dbReference>
<dbReference type="PROSITE" id="PS51374">
    <property type="entry name" value="NDPK_LIKE"/>
    <property type="match status" value="1"/>
</dbReference>
<reference key="1">
    <citation type="journal article" date="2008" name="PLoS ONE">
        <title>Genetic basis of virulence attenuation revealed by comparative genomic analysis of Mycobacterium tuberculosis strain H37Ra versus H37Rv.</title>
        <authorList>
            <person name="Zheng H."/>
            <person name="Lu L."/>
            <person name="Wang B."/>
            <person name="Pu S."/>
            <person name="Zhang X."/>
            <person name="Zhu G."/>
            <person name="Shi W."/>
            <person name="Zhang L."/>
            <person name="Wang H."/>
            <person name="Wang S."/>
            <person name="Zhao G."/>
            <person name="Zhang Y."/>
        </authorList>
    </citation>
    <scope>NUCLEOTIDE SEQUENCE [LARGE SCALE GENOMIC DNA]</scope>
    <source>
        <strain>ATCC 25177 / H37Ra</strain>
    </source>
</reference>
<sequence length="136" mass="14508">MTERTLVLIKPDGIERQLIGEIISRIERKGLTIAALQLRTVSAELASQHYAEHEGKPFFGSLLEFITSGPVVAAIVEGTRAIAAVRQLAGGTDPVQAAAPGTIRGDFALETQFNLVHGSDSAESAQREIALWFPGA</sequence>
<feature type="chain" id="PRO_1000026256" description="Nucleoside diphosphate kinase">
    <location>
        <begin position="1"/>
        <end position="136"/>
    </location>
</feature>
<feature type="active site" description="Pros-phosphohistidine intermediate" evidence="1">
    <location>
        <position position="117"/>
    </location>
</feature>
<feature type="binding site" evidence="1">
    <location>
        <position position="10"/>
    </location>
    <ligand>
        <name>ATP</name>
        <dbReference type="ChEBI" id="CHEBI:30616"/>
    </ligand>
</feature>
<feature type="binding site" evidence="1">
    <location>
        <position position="58"/>
    </location>
    <ligand>
        <name>ATP</name>
        <dbReference type="ChEBI" id="CHEBI:30616"/>
    </ligand>
</feature>
<feature type="binding site" evidence="1">
    <location>
        <position position="86"/>
    </location>
    <ligand>
        <name>ATP</name>
        <dbReference type="ChEBI" id="CHEBI:30616"/>
    </ligand>
</feature>
<feature type="binding site" evidence="1">
    <location>
        <position position="92"/>
    </location>
    <ligand>
        <name>ATP</name>
        <dbReference type="ChEBI" id="CHEBI:30616"/>
    </ligand>
</feature>
<feature type="binding site" evidence="1">
    <location>
        <position position="104"/>
    </location>
    <ligand>
        <name>ATP</name>
        <dbReference type="ChEBI" id="CHEBI:30616"/>
    </ligand>
</feature>
<feature type="binding site" evidence="1">
    <location>
        <position position="114"/>
    </location>
    <ligand>
        <name>ATP</name>
        <dbReference type="ChEBI" id="CHEBI:30616"/>
    </ligand>
</feature>
<gene>
    <name evidence="1" type="primary">ndk</name>
    <name type="ordered locus">MRA_2471</name>
</gene>
<accession>A5U5E1</accession>
<organism>
    <name type="scientific">Mycobacterium tuberculosis (strain ATCC 25177 / H37Ra)</name>
    <dbReference type="NCBI Taxonomy" id="419947"/>
    <lineage>
        <taxon>Bacteria</taxon>
        <taxon>Bacillati</taxon>
        <taxon>Actinomycetota</taxon>
        <taxon>Actinomycetes</taxon>
        <taxon>Mycobacteriales</taxon>
        <taxon>Mycobacteriaceae</taxon>
        <taxon>Mycobacterium</taxon>
        <taxon>Mycobacterium tuberculosis complex</taxon>
    </lineage>
</organism>
<name>NDK_MYCTA</name>